<evidence type="ECO:0000250" key="1"/>
<evidence type="ECO:0000250" key="2">
    <source>
        <dbReference type="UniProtKB" id="P14618"/>
    </source>
</evidence>
<evidence type="ECO:0000305" key="3"/>
<feature type="chain" id="PRO_0000294135" description="Pyruvate kinase">
    <location>
        <begin position="1"/>
        <end position="585"/>
    </location>
</feature>
<feature type="binding site" evidence="1">
    <location>
        <position position="32"/>
    </location>
    <ligand>
        <name>substrate</name>
    </ligand>
</feature>
<feature type="binding site" evidence="2">
    <location>
        <begin position="34"/>
        <end position="37"/>
    </location>
    <ligand>
        <name>ATP</name>
        <dbReference type="ChEBI" id="CHEBI:30616"/>
    </ligand>
</feature>
<feature type="binding site" evidence="1">
    <location>
        <position position="34"/>
    </location>
    <ligand>
        <name>K(+)</name>
        <dbReference type="ChEBI" id="CHEBI:29103"/>
    </ligand>
</feature>
<feature type="binding site" evidence="1">
    <location>
        <position position="36"/>
    </location>
    <ligand>
        <name>K(+)</name>
        <dbReference type="ChEBI" id="CHEBI:29103"/>
    </ligand>
</feature>
<feature type="binding site" evidence="1">
    <location>
        <position position="66"/>
    </location>
    <ligand>
        <name>K(+)</name>
        <dbReference type="ChEBI" id="CHEBI:29103"/>
    </ligand>
</feature>
<feature type="binding site" evidence="1">
    <location>
        <position position="67"/>
    </location>
    <ligand>
        <name>K(+)</name>
        <dbReference type="ChEBI" id="CHEBI:29103"/>
    </ligand>
</feature>
<feature type="binding site" evidence="2">
    <location>
        <position position="73"/>
    </location>
    <ligand>
        <name>ATP</name>
        <dbReference type="ChEBI" id="CHEBI:30616"/>
    </ligand>
</feature>
<feature type="binding site" evidence="2">
    <location>
        <position position="156"/>
    </location>
    <ligand>
        <name>ATP</name>
        <dbReference type="ChEBI" id="CHEBI:30616"/>
    </ligand>
</feature>
<feature type="binding site" evidence="1">
    <location>
        <position position="221"/>
    </location>
    <ligand>
        <name>Mg(2+)</name>
        <dbReference type="ChEBI" id="CHEBI:18420"/>
    </ligand>
</feature>
<feature type="binding site" evidence="1">
    <location>
        <position position="244"/>
    </location>
    <ligand>
        <name>substrate</name>
    </ligand>
</feature>
<feature type="binding site" evidence="1">
    <location>
        <position position="245"/>
    </location>
    <ligand>
        <name>Mg(2+)</name>
        <dbReference type="ChEBI" id="CHEBI:18420"/>
    </ligand>
</feature>
<feature type="binding site" evidence="1">
    <location>
        <position position="245"/>
    </location>
    <ligand>
        <name>substrate</name>
    </ligand>
</feature>
<feature type="binding site" evidence="1">
    <location>
        <position position="277"/>
    </location>
    <ligand>
        <name>substrate</name>
    </ligand>
</feature>
<feature type="site" description="Transition state stabilizer" evidence="1">
    <location>
        <position position="219"/>
    </location>
</feature>
<gene>
    <name type="primary">pyk</name>
    <name type="ordered locus">SAOUHSC_01806</name>
</gene>
<comment type="catalytic activity">
    <reaction>
        <text>pyruvate + ATP = phosphoenolpyruvate + ADP + H(+)</text>
        <dbReference type="Rhea" id="RHEA:18157"/>
        <dbReference type="ChEBI" id="CHEBI:15361"/>
        <dbReference type="ChEBI" id="CHEBI:15378"/>
        <dbReference type="ChEBI" id="CHEBI:30616"/>
        <dbReference type="ChEBI" id="CHEBI:58702"/>
        <dbReference type="ChEBI" id="CHEBI:456216"/>
        <dbReference type="EC" id="2.7.1.40"/>
    </reaction>
</comment>
<comment type="cofactor">
    <cofactor evidence="1">
        <name>Mg(2+)</name>
        <dbReference type="ChEBI" id="CHEBI:18420"/>
    </cofactor>
</comment>
<comment type="cofactor">
    <cofactor evidence="1">
        <name>K(+)</name>
        <dbReference type="ChEBI" id="CHEBI:29103"/>
    </cofactor>
</comment>
<comment type="pathway">
    <text>Carbohydrate degradation; glycolysis; pyruvate from D-glyceraldehyde 3-phosphate: step 5/5.</text>
</comment>
<comment type="similarity">
    <text evidence="3">Belongs to the pyruvate kinase family.</text>
</comment>
<comment type="similarity">
    <text evidence="3">In the C-terminal section; belongs to the PEP-utilizing enzyme family.</text>
</comment>
<proteinExistence type="inferred from homology"/>
<sequence length="585" mass="63102">MRKTKIVCTIGPASESEEMIEKLINAGMNVARLNFSHGSHEEHKGRIDTIRKVAKRLDKIVAILLDTKGPEIRTHNMKDGIIELERGNEVIVSMNEVEGTPEKFSVTYENLINDVQVGSYILLDDGLIELQVKDIDHAKKEVKCDILNSGELKNKKGVNLPGVRVSLPGITEKDAEDIRFGIKENVDFIAASFVRRPSDVLEIREILEEQKANISVFPKIENQEGIDNIAEILEVSDGLMVARGDMGVEIPPEKVPMVQKDLIRQCNKLGKPVITATQMLDSMQRNPRATRAEASDVANAIYDGTDAVMLSGETAAGLYPEEAVKTMRNIAVSAEAAQDYKKLLSDRTKLVETSLVNAIGISVAHTALNLNVKAIVAATESGSTARTISKYRPHSDIIAVTPSEETARQCSIVWGVQPVVKKGRKSTDALLNNAVATAVETGRVSNGDLIIITAGVPTGETGTTNMMKIHLVGDEIANGQGIGRGSVVGTTLVAETVKDLEGKDLSDKVIVTNSIDETFVPYVEKALGLITEENGITSPSAIVGLEKGIPTVVGVEKAVKNISNNMLVTIDAAQGKIFEGYANVL</sequence>
<keyword id="KW-0067">ATP-binding</keyword>
<keyword id="KW-0324">Glycolysis</keyword>
<keyword id="KW-0418">Kinase</keyword>
<keyword id="KW-0460">Magnesium</keyword>
<keyword id="KW-0479">Metal-binding</keyword>
<keyword id="KW-0547">Nucleotide-binding</keyword>
<keyword id="KW-0630">Potassium</keyword>
<keyword id="KW-0670">Pyruvate</keyword>
<keyword id="KW-1185">Reference proteome</keyword>
<keyword id="KW-0808">Transferase</keyword>
<dbReference type="EC" id="2.7.1.40"/>
<dbReference type="EMBL" id="CP000253">
    <property type="protein sequence ID" value="ABD30874.1"/>
    <property type="molecule type" value="Genomic_DNA"/>
</dbReference>
<dbReference type="RefSeq" id="WP_001232648.1">
    <property type="nucleotide sequence ID" value="NZ_LS483365.1"/>
</dbReference>
<dbReference type="RefSeq" id="YP_500311.1">
    <property type="nucleotide sequence ID" value="NC_007795.1"/>
</dbReference>
<dbReference type="SMR" id="Q2FXM9"/>
<dbReference type="STRING" id="93061.SAOUHSC_01806"/>
<dbReference type="PaxDb" id="1280-SAXN108_1726"/>
<dbReference type="GeneID" id="3919276"/>
<dbReference type="KEGG" id="sao:SAOUHSC_01806"/>
<dbReference type="PATRIC" id="fig|93061.5.peg.1646"/>
<dbReference type="eggNOG" id="COG0469">
    <property type="taxonomic scope" value="Bacteria"/>
</dbReference>
<dbReference type="HOGENOM" id="CLU_015439_0_2_9"/>
<dbReference type="OrthoDB" id="9812123at2"/>
<dbReference type="UniPathway" id="UPA00109">
    <property type="reaction ID" value="UER00188"/>
</dbReference>
<dbReference type="PRO" id="PR:Q2FXM9"/>
<dbReference type="Proteomes" id="UP000008816">
    <property type="component" value="Chromosome"/>
</dbReference>
<dbReference type="GO" id="GO:0005737">
    <property type="term" value="C:cytoplasm"/>
    <property type="evidence" value="ECO:0000318"/>
    <property type="project" value="GO_Central"/>
</dbReference>
<dbReference type="GO" id="GO:0005829">
    <property type="term" value="C:cytosol"/>
    <property type="evidence" value="ECO:0000318"/>
    <property type="project" value="GO_Central"/>
</dbReference>
<dbReference type="GO" id="GO:0005524">
    <property type="term" value="F:ATP binding"/>
    <property type="evidence" value="ECO:0007669"/>
    <property type="project" value="UniProtKB-KW"/>
</dbReference>
<dbReference type="GO" id="GO:0016301">
    <property type="term" value="F:kinase activity"/>
    <property type="evidence" value="ECO:0007669"/>
    <property type="project" value="UniProtKB-KW"/>
</dbReference>
<dbReference type="GO" id="GO:0000287">
    <property type="term" value="F:magnesium ion binding"/>
    <property type="evidence" value="ECO:0007669"/>
    <property type="project" value="InterPro"/>
</dbReference>
<dbReference type="GO" id="GO:0030955">
    <property type="term" value="F:potassium ion binding"/>
    <property type="evidence" value="ECO:0007669"/>
    <property type="project" value="InterPro"/>
</dbReference>
<dbReference type="GO" id="GO:0004743">
    <property type="term" value="F:pyruvate kinase activity"/>
    <property type="evidence" value="ECO:0000318"/>
    <property type="project" value="GO_Central"/>
</dbReference>
<dbReference type="GO" id="GO:0006096">
    <property type="term" value="P:glycolytic process"/>
    <property type="evidence" value="ECO:0000318"/>
    <property type="project" value="GO_Central"/>
</dbReference>
<dbReference type="FunFam" id="2.40.33.10:FF:000001">
    <property type="entry name" value="Pyruvate kinase"/>
    <property type="match status" value="1"/>
</dbReference>
<dbReference type="FunFam" id="3.20.20.60:FF:000001">
    <property type="entry name" value="Pyruvate kinase"/>
    <property type="match status" value="1"/>
</dbReference>
<dbReference type="FunFam" id="3.40.1380.20:FF:000017">
    <property type="entry name" value="Pyruvate kinase"/>
    <property type="match status" value="1"/>
</dbReference>
<dbReference type="Gene3D" id="3.20.20.60">
    <property type="entry name" value="Phosphoenolpyruvate-binding domains"/>
    <property type="match status" value="1"/>
</dbReference>
<dbReference type="Gene3D" id="3.50.30.10">
    <property type="entry name" value="Phosphohistidine domain"/>
    <property type="match status" value="1"/>
</dbReference>
<dbReference type="Gene3D" id="2.40.33.10">
    <property type="entry name" value="PK beta-barrel domain-like"/>
    <property type="match status" value="1"/>
</dbReference>
<dbReference type="Gene3D" id="3.40.1380.20">
    <property type="entry name" value="Pyruvate kinase, C-terminal domain"/>
    <property type="match status" value="1"/>
</dbReference>
<dbReference type="InterPro" id="IPR008279">
    <property type="entry name" value="PEP-util_enz_mobile_dom"/>
</dbReference>
<dbReference type="InterPro" id="IPR036637">
    <property type="entry name" value="Phosphohistidine_dom_sf"/>
</dbReference>
<dbReference type="InterPro" id="IPR001697">
    <property type="entry name" value="Pyr_Knase"/>
</dbReference>
<dbReference type="InterPro" id="IPR015813">
    <property type="entry name" value="Pyrv/PenolPyrv_kinase-like_dom"/>
</dbReference>
<dbReference type="InterPro" id="IPR040442">
    <property type="entry name" value="Pyrv_kinase-like_dom_sf"/>
</dbReference>
<dbReference type="InterPro" id="IPR011037">
    <property type="entry name" value="Pyrv_Knase-like_insert_dom_sf"/>
</dbReference>
<dbReference type="InterPro" id="IPR015793">
    <property type="entry name" value="Pyrv_Knase_brl"/>
</dbReference>
<dbReference type="InterPro" id="IPR015795">
    <property type="entry name" value="Pyrv_Knase_C"/>
</dbReference>
<dbReference type="InterPro" id="IPR036918">
    <property type="entry name" value="Pyrv_Knase_C_sf"/>
</dbReference>
<dbReference type="InterPro" id="IPR015806">
    <property type="entry name" value="Pyrv_Knase_insert_dom_sf"/>
</dbReference>
<dbReference type="NCBIfam" id="NF004491">
    <property type="entry name" value="PRK05826.1"/>
    <property type="match status" value="1"/>
</dbReference>
<dbReference type="NCBIfam" id="NF004978">
    <property type="entry name" value="PRK06354.1"/>
    <property type="match status" value="1"/>
</dbReference>
<dbReference type="NCBIfam" id="TIGR01064">
    <property type="entry name" value="pyruv_kin"/>
    <property type="match status" value="1"/>
</dbReference>
<dbReference type="PANTHER" id="PTHR11817">
    <property type="entry name" value="PYRUVATE KINASE"/>
    <property type="match status" value="1"/>
</dbReference>
<dbReference type="Pfam" id="PF00391">
    <property type="entry name" value="PEP-utilizers"/>
    <property type="match status" value="1"/>
</dbReference>
<dbReference type="Pfam" id="PF00224">
    <property type="entry name" value="PK"/>
    <property type="match status" value="1"/>
</dbReference>
<dbReference type="Pfam" id="PF02887">
    <property type="entry name" value="PK_C"/>
    <property type="match status" value="1"/>
</dbReference>
<dbReference type="PRINTS" id="PR01050">
    <property type="entry name" value="PYRUVTKNASE"/>
</dbReference>
<dbReference type="SUPFAM" id="SSF51621">
    <property type="entry name" value="Phosphoenolpyruvate/pyruvate domain"/>
    <property type="match status" value="1"/>
</dbReference>
<dbReference type="SUPFAM" id="SSF52009">
    <property type="entry name" value="Phosphohistidine domain"/>
    <property type="match status" value="1"/>
</dbReference>
<dbReference type="SUPFAM" id="SSF50800">
    <property type="entry name" value="PK beta-barrel domain-like"/>
    <property type="match status" value="1"/>
</dbReference>
<dbReference type="SUPFAM" id="SSF52935">
    <property type="entry name" value="PK C-terminal domain-like"/>
    <property type="match status" value="1"/>
</dbReference>
<accession>Q2FXM9</accession>
<organism>
    <name type="scientific">Staphylococcus aureus (strain NCTC 8325 / PS 47)</name>
    <dbReference type="NCBI Taxonomy" id="93061"/>
    <lineage>
        <taxon>Bacteria</taxon>
        <taxon>Bacillati</taxon>
        <taxon>Bacillota</taxon>
        <taxon>Bacilli</taxon>
        <taxon>Bacillales</taxon>
        <taxon>Staphylococcaceae</taxon>
        <taxon>Staphylococcus</taxon>
    </lineage>
</organism>
<name>KPYK_STAA8</name>
<reference key="1">
    <citation type="book" date="2006" name="Gram positive pathogens, 2nd edition">
        <title>The Staphylococcus aureus NCTC 8325 genome.</title>
        <editorList>
            <person name="Fischetti V."/>
            <person name="Novick R."/>
            <person name="Ferretti J."/>
            <person name="Portnoy D."/>
            <person name="Rood J."/>
        </editorList>
        <authorList>
            <person name="Gillaspy A.F."/>
            <person name="Worrell V."/>
            <person name="Orvis J."/>
            <person name="Roe B.A."/>
            <person name="Dyer D.W."/>
            <person name="Iandolo J.J."/>
        </authorList>
    </citation>
    <scope>NUCLEOTIDE SEQUENCE [LARGE SCALE GENOMIC DNA]</scope>
    <source>
        <strain>NCTC 8325 / PS 47</strain>
    </source>
</reference>
<protein>
    <recommendedName>
        <fullName>Pyruvate kinase</fullName>
        <shortName>PK</shortName>
        <ecNumber>2.7.1.40</ecNumber>
    </recommendedName>
</protein>